<sequence length="360" mass="39973">MSDLAKLESEILSAVAAAPDEAALEAVRVGALGKKGSISALLSTLGKMSPEERKTEGAAINAAKDKVTAALTARREVLKNAALDARLASETIDVTLPTRETPAEQGRIHPISQVMDELTAIFADMGFSIAEGPDIETDDYNFTKLNFPEGHPAREMHDTFFFNRKEDGSRPLLRTHTSPVQVRTMLSQQPPIRVICPGRTYRCDSDQTHTPMFHQVEGLVIDKGSHLGHLKWILSEFCKAFFEVDNVNMRFRPSFFPFTEPSMEVDIQCRRGKNDIRFGEGDDWLEILGCGMVHPNVLKNCGIDPDVYQGFAWGMGIDRIAMLKYGISDLRQMFEGDVRWLNHYGFKPLDVPTLAGGLSS</sequence>
<evidence type="ECO:0000255" key="1">
    <source>
        <dbReference type="HAMAP-Rule" id="MF_00281"/>
    </source>
</evidence>
<proteinExistence type="inferred from homology"/>
<name>SYFA_AFIC5</name>
<organism>
    <name type="scientific">Afipia carboxidovorans (strain ATCC 49405 / DSM 1227 / KCTC 32145 / OM5)</name>
    <name type="common">Oligotropha carboxidovorans</name>
    <dbReference type="NCBI Taxonomy" id="504832"/>
    <lineage>
        <taxon>Bacteria</taxon>
        <taxon>Pseudomonadati</taxon>
        <taxon>Pseudomonadota</taxon>
        <taxon>Alphaproteobacteria</taxon>
        <taxon>Hyphomicrobiales</taxon>
        <taxon>Nitrobacteraceae</taxon>
        <taxon>Afipia</taxon>
    </lineage>
</organism>
<protein>
    <recommendedName>
        <fullName evidence="1">Phenylalanine--tRNA ligase alpha subunit</fullName>
        <ecNumber evidence="1">6.1.1.20</ecNumber>
    </recommendedName>
    <alternativeName>
        <fullName evidence="1">Phenylalanyl-tRNA synthetase alpha subunit</fullName>
        <shortName evidence="1">PheRS</shortName>
    </alternativeName>
</protein>
<accession>B6JCK5</accession>
<accession>F8BRC0</accession>
<comment type="catalytic activity">
    <reaction evidence="1">
        <text>tRNA(Phe) + L-phenylalanine + ATP = L-phenylalanyl-tRNA(Phe) + AMP + diphosphate + H(+)</text>
        <dbReference type="Rhea" id="RHEA:19413"/>
        <dbReference type="Rhea" id="RHEA-COMP:9668"/>
        <dbReference type="Rhea" id="RHEA-COMP:9699"/>
        <dbReference type="ChEBI" id="CHEBI:15378"/>
        <dbReference type="ChEBI" id="CHEBI:30616"/>
        <dbReference type="ChEBI" id="CHEBI:33019"/>
        <dbReference type="ChEBI" id="CHEBI:58095"/>
        <dbReference type="ChEBI" id="CHEBI:78442"/>
        <dbReference type="ChEBI" id="CHEBI:78531"/>
        <dbReference type="ChEBI" id="CHEBI:456215"/>
        <dbReference type="EC" id="6.1.1.20"/>
    </reaction>
</comment>
<comment type="cofactor">
    <cofactor evidence="1">
        <name>Mg(2+)</name>
        <dbReference type="ChEBI" id="CHEBI:18420"/>
    </cofactor>
    <text evidence="1">Binds 2 magnesium ions per tetramer.</text>
</comment>
<comment type="subunit">
    <text evidence="1">Tetramer of two alpha and two beta subunits.</text>
</comment>
<comment type="subcellular location">
    <subcellularLocation>
        <location evidence="1">Cytoplasm</location>
    </subcellularLocation>
</comment>
<comment type="similarity">
    <text evidence="1">Belongs to the class-II aminoacyl-tRNA synthetase family. Phe-tRNA synthetase alpha subunit type 1 subfamily.</text>
</comment>
<feature type="chain" id="PRO_1000114895" description="Phenylalanine--tRNA ligase alpha subunit">
    <location>
        <begin position="1"/>
        <end position="360"/>
    </location>
</feature>
<feature type="binding site" evidence="1">
    <location>
        <position position="260"/>
    </location>
    <ligand>
        <name>Mg(2+)</name>
        <dbReference type="ChEBI" id="CHEBI:18420"/>
        <note>shared with beta subunit</note>
    </ligand>
</feature>
<reference key="1">
    <citation type="journal article" date="2008" name="J. Bacteriol.">
        <title>Genome sequence of the chemolithoautotrophic bacterium Oligotropha carboxidovorans OM5T.</title>
        <authorList>
            <person name="Paul D."/>
            <person name="Bridges S."/>
            <person name="Burgess S.C."/>
            <person name="Dandass Y."/>
            <person name="Lawrence M.L."/>
        </authorList>
    </citation>
    <scope>NUCLEOTIDE SEQUENCE [LARGE SCALE GENOMIC DNA]</scope>
    <source>
        <strain>ATCC 49405 / DSM 1227 / KCTC 32145 / OM5</strain>
    </source>
</reference>
<reference key="2">
    <citation type="journal article" date="2011" name="J. Bacteriol.">
        <title>Complete genome sequences of the chemolithoautotrophic Oligotropha carboxidovorans strains OM4 and OM5.</title>
        <authorList>
            <person name="Volland S."/>
            <person name="Rachinger M."/>
            <person name="Strittmatter A."/>
            <person name="Daniel R."/>
            <person name="Gottschalk G."/>
            <person name="Meyer O."/>
        </authorList>
    </citation>
    <scope>NUCLEOTIDE SEQUENCE [LARGE SCALE GENOMIC DNA]</scope>
    <source>
        <strain>ATCC 49405 / DSM 1227 / KCTC 32145 / OM5</strain>
    </source>
</reference>
<keyword id="KW-0030">Aminoacyl-tRNA synthetase</keyword>
<keyword id="KW-0067">ATP-binding</keyword>
<keyword id="KW-0963">Cytoplasm</keyword>
<keyword id="KW-0436">Ligase</keyword>
<keyword id="KW-0460">Magnesium</keyword>
<keyword id="KW-0479">Metal-binding</keyword>
<keyword id="KW-0547">Nucleotide-binding</keyword>
<keyword id="KW-0648">Protein biosynthesis</keyword>
<keyword id="KW-1185">Reference proteome</keyword>
<gene>
    <name evidence="1" type="primary">pheS</name>
    <name type="ordered locus">OCAR_4439</name>
    <name type="ordered locus">OCA5_c00920</name>
</gene>
<dbReference type="EC" id="6.1.1.20" evidence="1"/>
<dbReference type="EMBL" id="CP001196">
    <property type="protein sequence ID" value="ACI91585.1"/>
    <property type="molecule type" value="Genomic_DNA"/>
</dbReference>
<dbReference type="EMBL" id="CP002826">
    <property type="protein sequence ID" value="AEI04824.1"/>
    <property type="molecule type" value="Genomic_DNA"/>
</dbReference>
<dbReference type="RefSeq" id="WP_012561616.1">
    <property type="nucleotide sequence ID" value="NC_015684.1"/>
</dbReference>
<dbReference type="SMR" id="B6JCK5"/>
<dbReference type="STRING" id="504832.OCA5_c00920"/>
<dbReference type="KEGG" id="oca:OCAR_4439"/>
<dbReference type="KEGG" id="ocg:OCA5_c00920"/>
<dbReference type="PATRIC" id="fig|504832.7.peg.98"/>
<dbReference type="eggNOG" id="COG0016">
    <property type="taxonomic scope" value="Bacteria"/>
</dbReference>
<dbReference type="HOGENOM" id="CLU_025086_0_1_5"/>
<dbReference type="OrthoDB" id="9800719at2"/>
<dbReference type="Proteomes" id="UP000007730">
    <property type="component" value="Chromosome"/>
</dbReference>
<dbReference type="GO" id="GO:0005737">
    <property type="term" value="C:cytoplasm"/>
    <property type="evidence" value="ECO:0007669"/>
    <property type="project" value="UniProtKB-SubCell"/>
</dbReference>
<dbReference type="GO" id="GO:0005524">
    <property type="term" value="F:ATP binding"/>
    <property type="evidence" value="ECO:0007669"/>
    <property type="project" value="UniProtKB-UniRule"/>
</dbReference>
<dbReference type="GO" id="GO:0000287">
    <property type="term" value="F:magnesium ion binding"/>
    <property type="evidence" value="ECO:0007669"/>
    <property type="project" value="UniProtKB-UniRule"/>
</dbReference>
<dbReference type="GO" id="GO:0004826">
    <property type="term" value="F:phenylalanine-tRNA ligase activity"/>
    <property type="evidence" value="ECO:0007669"/>
    <property type="project" value="UniProtKB-UniRule"/>
</dbReference>
<dbReference type="GO" id="GO:0000049">
    <property type="term" value="F:tRNA binding"/>
    <property type="evidence" value="ECO:0007669"/>
    <property type="project" value="InterPro"/>
</dbReference>
<dbReference type="GO" id="GO:0006432">
    <property type="term" value="P:phenylalanyl-tRNA aminoacylation"/>
    <property type="evidence" value="ECO:0007669"/>
    <property type="project" value="UniProtKB-UniRule"/>
</dbReference>
<dbReference type="CDD" id="cd00496">
    <property type="entry name" value="PheRS_alpha_core"/>
    <property type="match status" value="1"/>
</dbReference>
<dbReference type="FunFam" id="3.30.930.10:FF:000003">
    <property type="entry name" value="Phenylalanine--tRNA ligase alpha subunit"/>
    <property type="match status" value="1"/>
</dbReference>
<dbReference type="Gene3D" id="3.30.930.10">
    <property type="entry name" value="Bira Bifunctional Protein, Domain 2"/>
    <property type="match status" value="1"/>
</dbReference>
<dbReference type="HAMAP" id="MF_00281">
    <property type="entry name" value="Phe_tRNA_synth_alpha1"/>
    <property type="match status" value="1"/>
</dbReference>
<dbReference type="InterPro" id="IPR006195">
    <property type="entry name" value="aa-tRNA-synth_II"/>
</dbReference>
<dbReference type="InterPro" id="IPR045864">
    <property type="entry name" value="aa-tRNA-synth_II/BPL/LPL"/>
</dbReference>
<dbReference type="InterPro" id="IPR004529">
    <property type="entry name" value="Phe-tRNA-synth_IIc_asu"/>
</dbReference>
<dbReference type="InterPro" id="IPR004188">
    <property type="entry name" value="Phe-tRNA_ligase_II_N"/>
</dbReference>
<dbReference type="InterPro" id="IPR022911">
    <property type="entry name" value="Phe_tRNA_ligase_alpha1_bac"/>
</dbReference>
<dbReference type="InterPro" id="IPR002319">
    <property type="entry name" value="Phenylalanyl-tRNA_Synthase"/>
</dbReference>
<dbReference type="InterPro" id="IPR010978">
    <property type="entry name" value="tRNA-bd_arm"/>
</dbReference>
<dbReference type="NCBIfam" id="TIGR00468">
    <property type="entry name" value="pheS"/>
    <property type="match status" value="1"/>
</dbReference>
<dbReference type="PANTHER" id="PTHR11538:SF41">
    <property type="entry name" value="PHENYLALANINE--TRNA LIGASE, MITOCHONDRIAL"/>
    <property type="match status" value="1"/>
</dbReference>
<dbReference type="PANTHER" id="PTHR11538">
    <property type="entry name" value="PHENYLALANYL-TRNA SYNTHETASE"/>
    <property type="match status" value="1"/>
</dbReference>
<dbReference type="Pfam" id="PF02912">
    <property type="entry name" value="Phe_tRNA-synt_N"/>
    <property type="match status" value="1"/>
</dbReference>
<dbReference type="Pfam" id="PF01409">
    <property type="entry name" value="tRNA-synt_2d"/>
    <property type="match status" value="1"/>
</dbReference>
<dbReference type="SUPFAM" id="SSF55681">
    <property type="entry name" value="Class II aaRS and biotin synthetases"/>
    <property type="match status" value="1"/>
</dbReference>
<dbReference type="SUPFAM" id="SSF46589">
    <property type="entry name" value="tRNA-binding arm"/>
    <property type="match status" value="1"/>
</dbReference>
<dbReference type="PROSITE" id="PS50862">
    <property type="entry name" value="AA_TRNA_LIGASE_II"/>
    <property type="match status" value="1"/>
</dbReference>